<accession>Q51371</accession>
<sequence length="543" mass="59802">MPDISLSIPRRRLPRLRPLAAAVLGAVLLHGQAWAAQPVEKPQPVPAQAGNEPGLTQGLKETGNYTVTTAPAEPLHLDPPKLPDLSGYTAAAVEAKIVRKPGGRASVQRMVQQQPLKEFTGGSNRLAEWVKRQRQMPQAIFIEGGYVNLAQLAGKLPASALEQVEPGVFVARLPIVVSQGATLDIDKQVKELRLSQERGAFLVNDGMLFVRDSKVTGWSESKKEPAWFKTPNEFRPFLISWGGAEVYLSNSTFTSFGYNASKAYGISISQYSPGMDKQMKRPRPKGWVIDSTIVDSWYGFYCYEADDLVVKGNTYRDNIVYGIDPHDRSHRLIIADNTVHGTRKKHGIIVSREVNDSFIFNNRSYENKLSGIVLDRNSEGNLVAYNEVYRNHSDGITLYESGDNLLWGNQVLANRRHGIRVRNSVNIRLYENLAAGNQLIGVYGHIKDLTNTDRNIALDPFDTKVSLIVVGGKLAGNGSGPLSVDSPLSLELYRVAMLAPTKSSGISLPGVLGEKQDQILDLLVRQDKAVLIDPVESQAELQD</sequence>
<comment type="function">
    <text evidence="3 4 5 6">Catalyzes the epimerization of beta-D-mannuronate to alpha-L-guluronate during the synthesis of the linear polysaccharide alginate (PubMed:15968068, PubMed:16866359, PubMed:8144447). In addition, is part of a periplasmic protein complex that protects alginate from degradation by AlgL by channeling the newly formed alginate polymer through a scaffold that transfers the alginate polymer through the periplasmic space to the outer membrane secretin AlgE (PubMed:12581364, PubMed:15968068).</text>
</comment>
<comment type="catalytic activity">
    <reaction evidence="4 5 6">
        <text>[(1-&gt;4)-beta-D-mannuronosyl](n) = [alginate](n)</text>
        <dbReference type="Rhea" id="RHEA:45572"/>
        <dbReference type="Rhea" id="RHEA-COMP:11264"/>
        <dbReference type="Rhea" id="RHEA-COMP:11270"/>
        <dbReference type="ChEBI" id="CHEBI:58187"/>
        <dbReference type="ChEBI" id="CHEBI:85311"/>
        <dbReference type="EC" id="5.1.3.37"/>
    </reaction>
</comment>
<comment type="activity regulation">
    <text evidence="6">Inhibited by the presence of acetyl groups on the substrate.</text>
</comment>
<comment type="pathway">
    <text evidence="3 6">Glycan biosynthesis; alginate biosynthesis.</text>
</comment>
<comment type="subcellular location">
    <subcellularLocation>
        <location evidence="6">Periplasm</location>
    </subcellularLocation>
</comment>
<comment type="domain">
    <text evidence="4">The C-terminal region contains a right-handed beta-helix (RHbetaH) fold, which is common among proteins that bind and cleave long-chain linear polysaccharides.</text>
</comment>
<comment type="disruption phenotype">
    <text evidence="3">Deletion mutant has a non-mucoid phenotype and secretes uronic acids instead of polymerized alginate.</text>
</comment>
<comment type="similarity">
    <text evidence="8">Belongs to the D-mannuronate C5-epimerase family.</text>
</comment>
<evidence type="ECO:0000250" key="1">
    <source>
        <dbReference type="UniProtKB" id="Q887Q3"/>
    </source>
</evidence>
<evidence type="ECO:0000255" key="2"/>
<evidence type="ECO:0000269" key="3">
    <source>
    </source>
</evidence>
<evidence type="ECO:0000269" key="4">
    <source>
    </source>
</evidence>
<evidence type="ECO:0000269" key="5">
    <source>
    </source>
</evidence>
<evidence type="ECO:0000269" key="6">
    <source>
    </source>
</evidence>
<evidence type="ECO:0000303" key="7">
    <source>
    </source>
</evidence>
<evidence type="ECO:0000305" key="8"/>
<keyword id="KW-0016">Alginate biosynthesis</keyword>
<keyword id="KW-0903">Direct protein sequencing</keyword>
<keyword id="KW-0413">Isomerase</keyword>
<keyword id="KW-0574">Periplasm</keyword>
<keyword id="KW-1185">Reference proteome</keyword>
<keyword id="KW-0677">Repeat</keyword>
<keyword id="KW-0732">Signal</keyword>
<organism>
    <name type="scientific">Pseudomonas aeruginosa (strain ATCC 15692 / DSM 22644 / CIP 104116 / JCM 14847 / LMG 12228 / 1C / PRS 101 / PAO1)</name>
    <dbReference type="NCBI Taxonomy" id="208964"/>
    <lineage>
        <taxon>Bacteria</taxon>
        <taxon>Pseudomonadati</taxon>
        <taxon>Pseudomonadota</taxon>
        <taxon>Gammaproteobacteria</taxon>
        <taxon>Pseudomonadales</taxon>
        <taxon>Pseudomonadaceae</taxon>
        <taxon>Pseudomonas</taxon>
    </lineage>
</organism>
<name>ALGG_PSEAE</name>
<reference key="1">
    <citation type="journal article" date="1994" name="J. Bacteriol.">
        <title>Pseudomonas aeruginosa AlgG is a polymer level alginate C5-mannuronan epimerase.</title>
        <authorList>
            <person name="Franklin M.J."/>
            <person name="Chitnis C.E."/>
            <person name="Gacesa P."/>
            <person name="Sonesson A."/>
            <person name="White D.C."/>
            <person name="Ohman D.E."/>
        </authorList>
    </citation>
    <scope>NUCLEOTIDE SEQUENCE [GENOMIC DNA]</scope>
    <scope>PROTEIN SEQUENCE OF 36-49</scope>
    <scope>FUNCTION</scope>
    <scope>CATALYTIC ACTIVITY</scope>
    <scope>ACTIVITY REGULATION</scope>
    <scope>PATHWAY</scope>
    <scope>SUBCELLULAR LOCATION</scope>
    <source>
        <strain>FRD1</strain>
    </source>
</reference>
<reference key="2">
    <citation type="journal article" date="1996" name="J. Bacteriol.">
        <title>Alginate synthesis in Pseudomonas aeruginosa: the role of AlgL (alginate lyase) and AlgX.</title>
        <authorList>
            <person name="Monday S.R."/>
            <person name="Schiller N.L."/>
        </authorList>
    </citation>
    <scope>NUCLEOTIDE SEQUENCE [GENOMIC DNA]</scope>
    <source>
        <strain>FRD1</strain>
    </source>
</reference>
<reference key="3">
    <citation type="journal article" date="2000" name="Nature">
        <title>Complete genome sequence of Pseudomonas aeruginosa PAO1, an opportunistic pathogen.</title>
        <authorList>
            <person name="Stover C.K."/>
            <person name="Pham X.-Q.T."/>
            <person name="Erwin A.L."/>
            <person name="Mizoguchi S.D."/>
            <person name="Warrener P."/>
            <person name="Hickey M.J."/>
            <person name="Brinkman F.S.L."/>
            <person name="Hufnagle W.O."/>
            <person name="Kowalik D.J."/>
            <person name="Lagrou M."/>
            <person name="Garber R.L."/>
            <person name="Goltry L."/>
            <person name="Tolentino E."/>
            <person name="Westbrock-Wadman S."/>
            <person name="Yuan Y."/>
            <person name="Brody L.L."/>
            <person name="Coulter S.N."/>
            <person name="Folger K.R."/>
            <person name="Kas A."/>
            <person name="Larbig K."/>
            <person name="Lim R.M."/>
            <person name="Smith K.A."/>
            <person name="Spencer D.H."/>
            <person name="Wong G.K.-S."/>
            <person name="Wu Z."/>
            <person name="Paulsen I.T."/>
            <person name="Reizer J."/>
            <person name="Saier M.H. Jr."/>
            <person name="Hancock R.E.W."/>
            <person name="Lory S."/>
            <person name="Olson M.V."/>
        </authorList>
    </citation>
    <scope>NUCLEOTIDE SEQUENCE [LARGE SCALE GENOMIC DNA]</scope>
    <source>
        <strain>ATCC 15692 / DSM 22644 / CIP 104116 / JCM 14847 / LMG 12228 / 1C / PRS 101 / PAO1</strain>
    </source>
</reference>
<reference key="4">
    <citation type="journal article" date="2003" name="Mol. Microbiol.">
        <title>The dual roles of AlgG in C-5-epimerization and secretion of alginate polymers in Pseudomonas aeruginosa.</title>
        <authorList>
            <person name="Jain S."/>
            <person name="Franklin M.J."/>
            <person name="Ertesvaag H."/>
            <person name="Valla S."/>
            <person name="Ohman D.E."/>
        </authorList>
    </citation>
    <scope>FUNCTION</scope>
    <scope>PATHWAY</scope>
    <scope>DISRUPTION PHENOTYPE</scope>
    <scope>MUTAGENESIS OF SER-272</scope>
    <source>
        <strain>FRD1</strain>
    </source>
</reference>
<reference key="5">
    <citation type="journal article" date="2005" name="J. Bacteriol.">
        <title>Epimerase active domain of Pseudomonas aeruginosa AlgG, a protein that contains a right-handed beta-helix.</title>
        <authorList>
            <person name="Douthit S.A."/>
            <person name="Dlakic M."/>
            <person name="Ohman D.E."/>
            <person name="Franklin M.J."/>
        </authorList>
    </citation>
    <scope>FUNCTION</scope>
    <scope>CATALYTIC ACTIVITY</scope>
    <scope>DOMAIN</scope>
    <scope>MUTAGENESIS OF ARG-316; ASP-324; PRO-325; HIS-326; ASP-327; ASN-361; ASN-362; SER-364; TYR-365; GLU-366; ASN-367; VAL-383 AND TYR-385</scope>
    <source>
        <strain>FRD1</strain>
    </source>
</reference>
<reference key="6">
    <citation type="journal article" date="2006" name="Biochemistry">
        <title>Chemical mechanism and specificity of the C5-mannuronan epimerase reaction.</title>
        <authorList>
            <person name="Jerga A."/>
            <person name="Stanley M.D."/>
            <person name="Tipton P.A."/>
        </authorList>
    </citation>
    <scope>FUNCTION</scope>
    <scope>CATALYTIC ACTIVITY</scope>
    <scope>REACTION MECHANISM</scope>
</reference>
<gene>
    <name evidence="7" type="primary">algG</name>
    <name type="ordered locus">PA3545</name>
</gene>
<dbReference type="EC" id="5.1.3.37" evidence="4 5 6"/>
<dbReference type="EMBL" id="U27829">
    <property type="protein sequence ID" value="AAA91125.1"/>
    <property type="molecule type" value="Genomic_DNA"/>
</dbReference>
<dbReference type="EMBL" id="AE004091">
    <property type="protein sequence ID" value="AAG06933.1"/>
    <property type="molecule type" value="Genomic_DNA"/>
</dbReference>
<dbReference type="PIR" id="F83202">
    <property type="entry name" value="F83202"/>
</dbReference>
<dbReference type="RefSeq" id="NP_252235.1">
    <property type="nucleotide sequence ID" value="NC_002516.2"/>
</dbReference>
<dbReference type="RefSeq" id="WP_003110465.1">
    <property type="nucleotide sequence ID" value="NZ_QZGE01000001.1"/>
</dbReference>
<dbReference type="SMR" id="Q51371"/>
<dbReference type="STRING" id="208964.PA3545"/>
<dbReference type="PaxDb" id="208964-PA3545"/>
<dbReference type="GeneID" id="879839"/>
<dbReference type="KEGG" id="pae:PA3545"/>
<dbReference type="PATRIC" id="fig|208964.12.peg.3709"/>
<dbReference type="PseudoCAP" id="PA3545"/>
<dbReference type="HOGENOM" id="CLU_038044_0_0_6"/>
<dbReference type="InParanoid" id="Q51371"/>
<dbReference type="OrthoDB" id="6189730at2"/>
<dbReference type="PhylomeDB" id="Q51371"/>
<dbReference type="BioCyc" id="MetaCyc:MONOMER-19193"/>
<dbReference type="BioCyc" id="PAER208964:G1FZ6-3613-MONOMER"/>
<dbReference type="BRENDA" id="5.1.3.37">
    <property type="organism ID" value="5087"/>
</dbReference>
<dbReference type="UniPathway" id="UPA00286"/>
<dbReference type="Proteomes" id="UP000002438">
    <property type="component" value="Chromosome"/>
</dbReference>
<dbReference type="GO" id="GO:0042597">
    <property type="term" value="C:periplasmic space"/>
    <property type="evidence" value="ECO:0007669"/>
    <property type="project" value="UniProtKB-SubCell"/>
</dbReference>
<dbReference type="GO" id="GO:0016853">
    <property type="term" value="F:isomerase activity"/>
    <property type="evidence" value="ECO:0007669"/>
    <property type="project" value="UniProtKB-KW"/>
</dbReference>
<dbReference type="GO" id="GO:0042121">
    <property type="term" value="P:alginic acid biosynthetic process"/>
    <property type="evidence" value="ECO:0000314"/>
    <property type="project" value="PseudoCAP"/>
</dbReference>
<dbReference type="Gene3D" id="2.160.20.10">
    <property type="entry name" value="Single-stranded right-handed beta-helix, Pectin lyase-like"/>
    <property type="match status" value="1"/>
</dbReference>
<dbReference type="InterPro" id="IPR006633">
    <property type="entry name" value="Carb-bd_sugar_hydrolysis-dom"/>
</dbReference>
<dbReference type="InterPro" id="IPR053409">
    <property type="entry name" value="Mannuronan_C5-epimerase"/>
</dbReference>
<dbReference type="InterPro" id="IPR007742">
    <property type="entry name" value="NosD_dom"/>
</dbReference>
<dbReference type="InterPro" id="IPR022441">
    <property type="entry name" value="Para_beta_helix_rpt-2"/>
</dbReference>
<dbReference type="InterPro" id="IPR006626">
    <property type="entry name" value="PbH1"/>
</dbReference>
<dbReference type="InterPro" id="IPR012334">
    <property type="entry name" value="Pectin_lyas_fold"/>
</dbReference>
<dbReference type="InterPro" id="IPR011050">
    <property type="entry name" value="Pectin_lyase_fold/virulence"/>
</dbReference>
<dbReference type="NCBIfam" id="NF038177">
    <property type="entry name" value="epimerase_AlgG"/>
    <property type="match status" value="1"/>
</dbReference>
<dbReference type="NCBIfam" id="TIGR03804">
    <property type="entry name" value="para_beta_helix"/>
    <property type="match status" value="1"/>
</dbReference>
<dbReference type="Pfam" id="PF05048">
    <property type="entry name" value="NosD"/>
    <property type="match status" value="1"/>
</dbReference>
<dbReference type="SMART" id="SM00722">
    <property type="entry name" value="CASH"/>
    <property type="match status" value="1"/>
</dbReference>
<dbReference type="SMART" id="SM00710">
    <property type="entry name" value="PbH1"/>
    <property type="match status" value="7"/>
</dbReference>
<dbReference type="SUPFAM" id="SSF51126">
    <property type="entry name" value="Pectin lyase-like"/>
    <property type="match status" value="1"/>
</dbReference>
<proteinExistence type="evidence at protein level"/>
<protein>
    <recommendedName>
        <fullName evidence="7">Mannuronan C5-epimerase</fullName>
        <ecNumber evidence="4 5 6">5.1.3.37</ecNumber>
    </recommendedName>
    <alternativeName>
        <fullName evidence="8">Poly(beta-D-mannuronate) C5 epimerase</fullName>
    </alternativeName>
</protein>
<feature type="signal peptide" evidence="6">
    <location>
        <begin position="1"/>
        <end position="35"/>
    </location>
</feature>
<feature type="chain" id="PRO_0000001125" description="Mannuronan C5-epimerase">
    <location>
        <begin position="36"/>
        <end position="543"/>
    </location>
</feature>
<feature type="repeat" description="PbH1 1" evidence="2">
    <location>
        <begin position="243"/>
        <end position="270"/>
    </location>
</feature>
<feature type="repeat" description="PbH1 2" evidence="2">
    <location>
        <begin position="283"/>
        <end position="304"/>
    </location>
</feature>
<feature type="repeat" description="PbH1 3" evidence="2">
    <location>
        <begin position="305"/>
        <end position="327"/>
    </location>
</feature>
<feature type="repeat" description="PbH1 4" evidence="2">
    <location>
        <begin position="329"/>
        <end position="352"/>
    </location>
</feature>
<feature type="repeat" description="PbH1 5" evidence="2">
    <location>
        <begin position="354"/>
        <end position="376"/>
    </location>
</feature>
<feature type="repeat" description="PbH1 6" evidence="2">
    <location>
        <begin position="378"/>
        <end position="400"/>
    </location>
</feature>
<feature type="repeat" description="PbH1 7" evidence="2">
    <location>
        <begin position="401"/>
        <end position="423"/>
    </location>
</feature>
<feature type="active site" description="Proton acceptor" evidence="1">
    <location>
        <position position="326"/>
    </location>
</feature>
<feature type="mutagenesis site" description="Loss of epimerase activity; still capable of protecting the polymer from depolymerization by AlgL lyase." evidence="3">
    <original>S</original>
    <variation>N</variation>
    <location>
        <position position="272"/>
    </location>
</feature>
<feature type="mutagenesis site" description="Can complement the alginate secretion defect and the epimerase defect of FRD1200 mutant, but cannot complement the epimerase defect of FRD462 mutant." evidence="4">
    <original>R</original>
    <variation>A</variation>
    <location>
        <position position="316"/>
    </location>
</feature>
<feature type="mutagenesis site" description="Can complement the alginate secretion defect of FRD1200 mutant, but not the epimerization defect." evidence="4">
    <original>D</original>
    <variation>A</variation>
    <location>
        <position position="324"/>
    </location>
</feature>
<feature type="mutagenesis site" description="Can complement the alginate secretion defect of FRD1200 mutant, but not the epimerization defect." evidence="4">
    <original>P</original>
    <variation>A</variation>
    <location>
        <position position="325"/>
    </location>
</feature>
<feature type="mutagenesis site" description="Can complement the alginate secretion defect of FRD1200 mutant, but not the epimerization defect." evidence="4">
    <original>H</original>
    <variation>A</variation>
    <location>
        <position position="326"/>
    </location>
</feature>
<feature type="mutagenesis site" description="Can complement the alginate secretion defect of FRD1200 mutant, but not the epimerization defect." evidence="4">
    <original>D</original>
    <variation>A</variation>
    <location>
        <position position="327"/>
    </location>
</feature>
<feature type="mutagenesis site" description="Can complement the alginate secretion defect and the epimerase defect of FRD1200 mutant, but cannot complement the epimerase defect of FRD462 mutant." evidence="4">
    <original>N</original>
    <variation>A</variation>
    <location>
        <position position="361"/>
    </location>
</feature>
<feature type="mutagenesis site" description="Cannot complement the alginate secretion defect of FRD1200 mutant or the epimerase defect of FRD462 mutant." evidence="4">
    <original>N</original>
    <variation>A</variation>
    <location>
        <position position="362"/>
    </location>
</feature>
<feature type="mutagenesis site" description="Can complement the alginate secretion defect of FRD1200 mutant and the epimerase defect of FRD462 mutant." evidence="4">
    <original>S</original>
    <variation>A</variation>
    <location>
        <position position="364"/>
    </location>
</feature>
<feature type="mutagenesis site" description="Can complement the alginate secretion defect of FRD1200 mutant and the epimerase defect of FRD462 mutant." evidence="4">
    <original>Y</original>
    <variation>F</variation>
    <location>
        <position position="365"/>
    </location>
</feature>
<feature type="mutagenesis site" description="Can complement the alginate secretion defect of FRD1200 mutant and the epimerase defect of FRD462 mutant." evidence="4">
    <original>E</original>
    <variation>A</variation>
    <location>
        <position position="366"/>
    </location>
</feature>
<feature type="mutagenesis site" description="Cannot complement the alginate secretion defect of FRD1200 mutant or the epimerase defect of FRD462 mutant." evidence="4">
    <original>N</original>
    <variation>A</variation>
    <location>
        <position position="367"/>
    </location>
</feature>
<feature type="mutagenesis site" description="Cannot complement the alginate secretion defect of FRD1200 mutant or the epimerase defect of FRD462 mutant." evidence="4">
    <original>V</original>
    <variation>A</variation>
    <location>
        <position position="383"/>
    </location>
</feature>
<feature type="mutagenesis site" description="Can complement the alginate secretion defect of FRD1200 mutant and the epimerase defect of FRD462 mutant." evidence="4">
    <original>Y</original>
    <variation>F</variation>
    <location>
        <position position="385"/>
    </location>
</feature>